<comment type="function">
    <text evidence="1">Plays a role in the flagellum-specific transport system.</text>
</comment>
<comment type="subcellular location">
    <subcellularLocation>
        <location evidence="3">Cell membrane</location>
        <topology evidence="3">Multi-pass membrane protein</topology>
    </subcellularLocation>
    <subcellularLocation>
        <location evidence="1">Bacterial flagellum basal body</location>
    </subcellularLocation>
</comment>
<comment type="similarity">
    <text evidence="3">Belongs to the FliP/MopC/SpaP family.</text>
</comment>
<accession>P35528</accession>
<protein>
    <recommendedName>
        <fullName>Flagellar biosynthetic protein FliP</fullName>
    </recommendedName>
</protein>
<evidence type="ECO:0000250" key="1"/>
<evidence type="ECO:0000255" key="2"/>
<evidence type="ECO:0000305" key="3"/>
<feature type="chain" id="PRO_0000191979" description="Flagellar biosynthetic protein FliP">
    <location>
        <begin position="1"/>
        <end position="221"/>
    </location>
</feature>
<feature type="transmembrane region" description="Helical" evidence="2">
    <location>
        <begin position="22"/>
        <end position="42"/>
    </location>
</feature>
<feature type="transmembrane region" description="Helical" evidence="2">
    <location>
        <begin position="66"/>
        <end position="86"/>
    </location>
</feature>
<feature type="transmembrane region" description="Helical" evidence="2">
    <location>
        <begin position="163"/>
        <end position="183"/>
    </location>
</feature>
<feature type="transmembrane region" description="Helical" evidence="2">
    <location>
        <begin position="187"/>
        <end position="207"/>
    </location>
</feature>
<reference key="1">
    <citation type="journal article" date="1992" name="J. Bacteriol.">
        <title>Nucleotide sequences of Bacillus subtilis flagellar biosynthetic genes fliP and fliQ and identification of a novel flagellar gene, fliZ.</title>
        <authorList>
            <person name="Bischoff D.S."/>
            <person name="Weinreich M.D."/>
            <person name="Ordal G.W."/>
        </authorList>
    </citation>
    <scope>NUCLEOTIDE SEQUENCE [GENOMIC DNA]</scope>
    <source>
        <strain>168 / OI1085</strain>
    </source>
</reference>
<reference key="2">
    <citation type="journal article" date="1997" name="Nature">
        <title>The complete genome sequence of the Gram-positive bacterium Bacillus subtilis.</title>
        <authorList>
            <person name="Kunst F."/>
            <person name="Ogasawara N."/>
            <person name="Moszer I."/>
            <person name="Albertini A.M."/>
            <person name="Alloni G."/>
            <person name="Azevedo V."/>
            <person name="Bertero M.G."/>
            <person name="Bessieres P."/>
            <person name="Bolotin A."/>
            <person name="Borchert S."/>
            <person name="Borriss R."/>
            <person name="Boursier L."/>
            <person name="Brans A."/>
            <person name="Braun M."/>
            <person name="Brignell S.C."/>
            <person name="Bron S."/>
            <person name="Brouillet S."/>
            <person name="Bruschi C.V."/>
            <person name="Caldwell B."/>
            <person name="Capuano V."/>
            <person name="Carter N.M."/>
            <person name="Choi S.-K."/>
            <person name="Codani J.-J."/>
            <person name="Connerton I.F."/>
            <person name="Cummings N.J."/>
            <person name="Daniel R.A."/>
            <person name="Denizot F."/>
            <person name="Devine K.M."/>
            <person name="Duesterhoeft A."/>
            <person name="Ehrlich S.D."/>
            <person name="Emmerson P.T."/>
            <person name="Entian K.-D."/>
            <person name="Errington J."/>
            <person name="Fabret C."/>
            <person name="Ferrari E."/>
            <person name="Foulger D."/>
            <person name="Fritz C."/>
            <person name="Fujita M."/>
            <person name="Fujita Y."/>
            <person name="Fuma S."/>
            <person name="Galizzi A."/>
            <person name="Galleron N."/>
            <person name="Ghim S.-Y."/>
            <person name="Glaser P."/>
            <person name="Goffeau A."/>
            <person name="Golightly E.J."/>
            <person name="Grandi G."/>
            <person name="Guiseppi G."/>
            <person name="Guy B.J."/>
            <person name="Haga K."/>
            <person name="Haiech J."/>
            <person name="Harwood C.R."/>
            <person name="Henaut A."/>
            <person name="Hilbert H."/>
            <person name="Holsappel S."/>
            <person name="Hosono S."/>
            <person name="Hullo M.-F."/>
            <person name="Itaya M."/>
            <person name="Jones L.-M."/>
            <person name="Joris B."/>
            <person name="Karamata D."/>
            <person name="Kasahara Y."/>
            <person name="Klaerr-Blanchard M."/>
            <person name="Klein C."/>
            <person name="Kobayashi Y."/>
            <person name="Koetter P."/>
            <person name="Koningstein G."/>
            <person name="Krogh S."/>
            <person name="Kumano M."/>
            <person name="Kurita K."/>
            <person name="Lapidus A."/>
            <person name="Lardinois S."/>
            <person name="Lauber J."/>
            <person name="Lazarevic V."/>
            <person name="Lee S.-M."/>
            <person name="Levine A."/>
            <person name="Liu H."/>
            <person name="Masuda S."/>
            <person name="Mauel C."/>
            <person name="Medigue C."/>
            <person name="Medina N."/>
            <person name="Mellado R.P."/>
            <person name="Mizuno M."/>
            <person name="Moestl D."/>
            <person name="Nakai S."/>
            <person name="Noback M."/>
            <person name="Noone D."/>
            <person name="O'Reilly M."/>
            <person name="Ogawa K."/>
            <person name="Ogiwara A."/>
            <person name="Oudega B."/>
            <person name="Park S.-H."/>
            <person name="Parro V."/>
            <person name="Pohl T.M."/>
            <person name="Portetelle D."/>
            <person name="Porwollik S."/>
            <person name="Prescott A.M."/>
            <person name="Presecan E."/>
            <person name="Pujic P."/>
            <person name="Purnelle B."/>
            <person name="Rapoport G."/>
            <person name="Rey M."/>
            <person name="Reynolds S."/>
            <person name="Rieger M."/>
            <person name="Rivolta C."/>
            <person name="Rocha E."/>
            <person name="Roche B."/>
            <person name="Rose M."/>
            <person name="Sadaie Y."/>
            <person name="Sato T."/>
            <person name="Scanlan E."/>
            <person name="Schleich S."/>
            <person name="Schroeter R."/>
            <person name="Scoffone F."/>
            <person name="Sekiguchi J."/>
            <person name="Sekowska A."/>
            <person name="Seror S.J."/>
            <person name="Serror P."/>
            <person name="Shin B.-S."/>
            <person name="Soldo B."/>
            <person name="Sorokin A."/>
            <person name="Tacconi E."/>
            <person name="Takagi T."/>
            <person name="Takahashi H."/>
            <person name="Takemaru K."/>
            <person name="Takeuchi M."/>
            <person name="Tamakoshi A."/>
            <person name="Tanaka T."/>
            <person name="Terpstra P."/>
            <person name="Tognoni A."/>
            <person name="Tosato V."/>
            <person name="Uchiyama S."/>
            <person name="Vandenbol M."/>
            <person name="Vannier F."/>
            <person name="Vassarotti A."/>
            <person name="Viari A."/>
            <person name="Wambutt R."/>
            <person name="Wedler E."/>
            <person name="Wedler H."/>
            <person name="Weitzenegger T."/>
            <person name="Winters P."/>
            <person name="Wipat A."/>
            <person name="Yamamoto H."/>
            <person name="Yamane K."/>
            <person name="Yasumoto K."/>
            <person name="Yata K."/>
            <person name="Yoshida K."/>
            <person name="Yoshikawa H.-F."/>
            <person name="Zumstein E."/>
            <person name="Yoshikawa H."/>
            <person name="Danchin A."/>
        </authorList>
    </citation>
    <scope>NUCLEOTIDE SEQUENCE [LARGE SCALE GENOMIC DNA]</scope>
    <source>
        <strain>168</strain>
    </source>
</reference>
<keyword id="KW-0975">Bacterial flagellum</keyword>
<keyword id="KW-1005">Bacterial flagellum biogenesis</keyword>
<keyword id="KW-1006">Bacterial flagellum protein export</keyword>
<keyword id="KW-1003">Cell membrane</keyword>
<keyword id="KW-0472">Membrane</keyword>
<keyword id="KW-0653">Protein transport</keyword>
<keyword id="KW-1185">Reference proteome</keyword>
<keyword id="KW-0812">Transmembrane</keyword>
<keyword id="KW-1133">Transmembrane helix</keyword>
<keyword id="KW-0813">Transport</keyword>
<gene>
    <name type="primary">fliP</name>
    <name type="synonym">cheC</name>
    <name type="ordered locus">BSU16350</name>
</gene>
<dbReference type="EMBL" id="M87005">
    <property type="protein sequence ID" value="AAA22453.1"/>
    <property type="molecule type" value="Genomic_DNA"/>
</dbReference>
<dbReference type="EMBL" id="AL009126">
    <property type="protein sequence ID" value="CAB13508.1"/>
    <property type="molecule type" value="Genomic_DNA"/>
</dbReference>
<dbReference type="PIR" id="C41886">
    <property type="entry name" value="C41886"/>
</dbReference>
<dbReference type="RefSeq" id="NP_389517.1">
    <property type="nucleotide sequence ID" value="NC_000964.3"/>
</dbReference>
<dbReference type="RefSeq" id="WP_003245692.1">
    <property type="nucleotide sequence ID" value="NZ_OZ025638.1"/>
</dbReference>
<dbReference type="SMR" id="P35528"/>
<dbReference type="FunCoup" id="P35528">
    <property type="interactions" value="173"/>
</dbReference>
<dbReference type="STRING" id="224308.BSU16350"/>
<dbReference type="PaxDb" id="224308-BSU16350"/>
<dbReference type="EnsemblBacteria" id="CAB13508">
    <property type="protein sequence ID" value="CAB13508"/>
    <property type="gene ID" value="BSU_16350"/>
</dbReference>
<dbReference type="GeneID" id="86873855"/>
<dbReference type="GeneID" id="940095"/>
<dbReference type="KEGG" id="bsu:BSU16350"/>
<dbReference type="PATRIC" id="fig|224308.179.peg.1776"/>
<dbReference type="eggNOG" id="COG1338">
    <property type="taxonomic scope" value="Bacteria"/>
</dbReference>
<dbReference type="InParanoid" id="P35528"/>
<dbReference type="OrthoDB" id="9805111at2"/>
<dbReference type="PhylomeDB" id="P35528"/>
<dbReference type="BioCyc" id="BSUB:BSU16350-MONOMER"/>
<dbReference type="Proteomes" id="UP000001570">
    <property type="component" value="Chromosome"/>
</dbReference>
<dbReference type="GO" id="GO:0009425">
    <property type="term" value="C:bacterial-type flagellum basal body"/>
    <property type="evidence" value="ECO:0007669"/>
    <property type="project" value="UniProtKB-SubCell"/>
</dbReference>
<dbReference type="GO" id="GO:0005886">
    <property type="term" value="C:plasma membrane"/>
    <property type="evidence" value="ECO:0000318"/>
    <property type="project" value="GO_Central"/>
</dbReference>
<dbReference type="GO" id="GO:0044780">
    <property type="term" value="P:bacterial-type flagellum assembly"/>
    <property type="evidence" value="ECO:0000315"/>
    <property type="project" value="CACAO"/>
</dbReference>
<dbReference type="GO" id="GO:0071978">
    <property type="term" value="P:bacterial-type flagellum-dependent swarming motility"/>
    <property type="evidence" value="ECO:0000315"/>
    <property type="project" value="CACAO"/>
</dbReference>
<dbReference type="GO" id="GO:0009306">
    <property type="term" value="P:protein secretion"/>
    <property type="evidence" value="ECO:0007669"/>
    <property type="project" value="InterPro"/>
</dbReference>
<dbReference type="InterPro" id="IPR005837">
    <property type="entry name" value="FliP"/>
</dbReference>
<dbReference type="InterPro" id="IPR005838">
    <property type="entry name" value="T3SS_IM_P"/>
</dbReference>
<dbReference type="NCBIfam" id="TIGR01103">
    <property type="entry name" value="fliP"/>
    <property type="match status" value="1"/>
</dbReference>
<dbReference type="NCBIfam" id="NF009438">
    <property type="entry name" value="PRK12797.1"/>
    <property type="match status" value="1"/>
</dbReference>
<dbReference type="PANTHER" id="PTHR30587">
    <property type="entry name" value="FLAGELLAR BIOSYNTHETIC PROTEIN FLIP"/>
    <property type="match status" value="1"/>
</dbReference>
<dbReference type="PANTHER" id="PTHR30587:SF0">
    <property type="entry name" value="FLAGELLAR BIOSYNTHETIC PROTEIN FLIP"/>
    <property type="match status" value="1"/>
</dbReference>
<dbReference type="Pfam" id="PF00813">
    <property type="entry name" value="FliP"/>
    <property type="match status" value="1"/>
</dbReference>
<dbReference type="PRINTS" id="PR00951">
    <property type="entry name" value="FLGBIOSNFLIP"/>
</dbReference>
<dbReference type="PRINTS" id="PR01302">
    <property type="entry name" value="TYPE3IMPPROT"/>
</dbReference>
<dbReference type="PROSITE" id="PS01060">
    <property type="entry name" value="FLIP_1"/>
    <property type="match status" value="1"/>
</dbReference>
<dbReference type="PROSITE" id="PS01061">
    <property type="entry name" value="FLIP_2"/>
    <property type="match status" value="1"/>
</dbReference>
<organism>
    <name type="scientific">Bacillus subtilis (strain 168)</name>
    <dbReference type="NCBI Taxonomy" id="224308"/>
    <lineage>
        <taxon>Bacteria</taxon>
        <taxon>Bacillati</taxon>
        <taxon>Bacillota</taxon>
        <taxon>Bacilli</taxon>
        <taxon>Bacillales</taxon>
        <taxon>Bacillaceae</taxon>
        <taxon>Bacillus</taxon>
    </lineage>
</organism>
<proteinExistence type="inferred from homology"/>
<name>FLIP_BACSU</name>
<sequence>MNEFINIFSSSDPENVSSTVKLLLLLTVFSVAPGILILMTCFTRIVIVLSFVRTSLATQSMPPNQVLIGLALFLTFFIMAPTFSEINKEALTPLMDNKISLDEAYTKAEEPIKEFMSKHTRQKDLALFMNYAKMDKPESLKDIPLTTMVPAFAISELKTAFQIGFMIFIPFLIIDMVVASVLMSMGMMMLPPVMISLPFKILLFVLVDGWYLIVKSLLQSF</sequence>